<reference key="1">
    <citation type="journal article" date="2004" name="Proc. Natl. Acad. Sci. U.S.A.">
        <title>Insights into the evolution of Yersinia pestis through whole-genome comparison with Yersinia pseudotuberculosis.</title>
        <authorList>
            <person name="Chain P.S.G."/>
            <person name="Carniel E."/>
            <person name="Larimer F.W."/>
            <person name="Lamerdin J."/>
            <person name="Stoutland P.O."/>
            <person name="Regala W.M."/>
            <person name="Georgescu A.M."/>
            <person name="Vergez L.M."/>
            <person name="Land M.L."/>
            <person name="Motin V.L."/>
            <person name="Brubaker R.R."/>
            <person name="Fowler J."/>
            <person name="Hinnebusch J."/>
            <person name="Marceau M."/>
            <person name="Medigue C."/>
            <person name="Simonet M."/>
            <person name="Chenal-Francisque V."/>
            <person name="Souza B."/>
            <person name="Dacheux D."/>
            <person name="Elliott J.M."/>
            <person name="Derbise A."/>
            <person name="Hauser L.J."/>
            <person name="Garcia E."/>
        </authorList>
    </citation>
    <scope>NUCLEOTIDE SEQUENCE [LARGE SCALE GENOMIC DNA]</scope>
    <source>
        <strain>IP32953</strain>
    </source>
</reference>
<feature type="chain" id="PRO_0000077008" description="Iron-binding protein IscA">
    <location>
        <begin position="1"/>
        <end position="107"/>
    </location>
</feature>
<feature type="binding site" evidence="1">
    <location>
        <position position="35"/>
    </location>
    <ligand>
        <name>Fe cation</name>
        <dbReference type="ChEBI" id="CHEBI:24875"/>
    </ligand>
</feature>
<feature type="binding site" evidence="1">
    <location>
        <position position="99"/>
    </location>
    <ligand>
        <name>Fe cation</name>
        <dbReference type="ChEBI" id="CHEBI:24875"/>
    </ligand>
</feature>
<feature type="binding site" evidence="1">
    <location>
        <position position="101"/>
    </location>
    <ligand>
        <name>Fe cation</name>
        <dbReference type="ChEBI" id="CHEBI:24875"/>
    </ligand>
</feature>
<protein>
    <recommendedName>
        <fullName evidence="1">Iron-binding protein IscA</fullName>
    </recommendedName>
    <alternativeName>
        <fullName evidence="1">Iron-sulfur cluster assembly protein</fullName>
    </alternativeName>
</protein>
<name>ISCA_YERPS</name>
<accession>Q667Y3</accession>
<evidence type="ECO:0000255" key="1">
    <source>
        <dbReference type="HAMAP-Rule" id="MF_01429"/>
    </source>
</evidence>
<organism>
    <name type="scientific">Yersinia pseudotuberculosis serotype I (strain IP32953)</name>
    <dbReference type="NCBI Taxonomy" id="273123"/>
    <lineage>
        <taxon>Bacteria</taxon>
        <taxon>Pseudomonadati</taxon>
        <taxon>Pseudomonadota</taxon>
        <taxon>Gammaproteobacteria</taxon>
        <taxon>Enterobacterales</taxon>
        <taxon>Yersiniaceae</taxon>
        <taxon>Yersinia</taxon>
    </lineage>
</organism>
<gene>
    <name evidence="1" type="primary">iscA</name>
    <name type="ordered locus">YPTB2857</name>
</gene>
<proteinExistence type="inferred from homology"/>
<dbReference type="EMBL" id="BX936398">
    <property type="protein sequence ID" value="CAH22095.1"/>
    <property type="molecule type" value="Genomic_DNA"/>
</dbReference>
<dbReference type="RefSeq" id="WP_002209834.1">
    <property type="nucleotide sequence ID" value="NZ_CP009712.1"/>
</dbReference>
<dbReference type="SMR" id="Q667Y3"/>
<dbReference type="GeneID" id="96662216"/>
<dbReference type="KEGG" id="ypo:BZ17_3774"/>
<dbReference type="KEGG" id="yps:YPTB2857"/>
<dbReference type="PATRIC" id="fig|273123.14.peg.3960"/>
<dbReference type="Proteomes" id="UP000001011">
    <property type="component" value="Chromosome"/>
</dbReference>
<dbReference type="GO" id="GO:0005829">
    <property type="term" value="C:cytosol"/>
    <property type="evidence" value="ECO:0007669"/>
    <property type="project" value="TreeGrafter"/>
</dbReference>
<dbReference type="GO" id="GO:0051537">
    <property type="term" value="F:2 iron, 2 sulfur cluster binding"/>
    <property type="evidence" value="ECO:0007669"/>
    <property type="project" value="UniProtKB-ARBA"/>
</dbReference>
<dbReference type="GO" id="GO:0005506">
    <property type="term" value="F:iron ion binding"/>
    <property type="evidence" value="ECO:0007669"/>
    <property type="project" value="UniProtKB-UniRule"/>
</dbReference>
<dbReference type="GO" id="GO:0016226">
    <property type="term" value="P:iron-sulfur cluster assembly"/>
    <property type="evidence" value="ECO:0007669"/>
    <property type="project" value="UniProtKB-UniRule"/>
</dbReference>
<dbReference type="FunFam" id="2.60.300.12:FF:000001">
    <property type="entry name" value="Iron-binding protein IscA"/>
    <property type="match status" value="1"/>
</dbReference>
<dbReference type="Gene3D" id="2.60.300.12">
    <property type="entry name" value="HesB-like domain"/>
    <property type="match status" value="1"/>
</dbReference>
<dbReference type="HAMAP" id="MF_01429">
    <property type="entry name" value="Fe_S_insert_IscA"/>
    <property type="match status" value="1"/>
</dbReference>
<dbReference type="InterPro" id="IPR050322">
    <property type="entry name" value="Fe-S_cluster_asmbl/transfer"/>
</dbReference>
<dbReference type="InterPro" id="IPR000361">
    <property type="entry name" value="FeS_biogenesis"/>
</dbReference>
<dbReference type="InterPro" id="IPR016092">
    <property type="entry name" value="FeS_cluster_insertion"/>
</dbReference>
<dbReference type="InterPro" id="IPR017870">
    <property type="entry name" value="FeS_cluster_insertion_CS"/>
</dbReference>
<dbReference type="InterPro" id="IPR035903">
    <property type="entry name" value="HesB-like_dom_sf"/>
</dbReference>
<dbReference type="InterPro" id="IPR011302">
    <property type="entry name" value="IscA_proteobacteria"/>
</dbReference>
<dbReference type="NCBIfam" id="TIGR00049">
    <property type="entry name" value="iron-sulfur cluster assembly accessory protein"/>
    <property type="match status" value="1"/>
</dbReference>
<dbReference type="NCBIfam" id="TIGR02011">
    <property type="entry name" value="IscA"/>
    <property type="match status" value="1"/>
</dbReference>
<dbReference type="NCBIfam" id="NF007049">
    <property type="entry name" value="PRK09502.1"/>
    <property type="match status" value="1"/>
</dbReference>
<dbReference type="PANTHER" id="PTHR10072:SF41">
    <property type="entry name" value="IRON-SULFUR CLUSTER ASSEMBLY 1 HOMOLOG, MITOCHONDRIAL"/>
    <property type="match status" value="1"/>
</dbReference>
<dbReference type="PANTHER" id="PTHR10072">
    <property type="entry name" value="IRON-SULFUR CLUSTER ASSEMBLY PROTEIN"/>
    <property type="match status" value="1"/>
</dbReference>
<dbReference type="Pfam" id="PF01521">
    <property type="entry name" value="Fe-S_biosyn"/>
    <property type="match status" value="1"/>
</dbReference>
<dbReference type="SUPFAM" id="SSF89360">
    <property type="entry name" value="HesB-like domain"/>
    <property type="match status" value="1"/>
</dbReference>
<dbReference type="PROSITE" id="PS01152">
    <property type="entry name" value="HESB"/>
    <property type="match status" value="1"/>
</dbReference>
<sequence length="107" mass="11589">MSISISDSAAQRVSAFLNHRGKGLGLRLGVRTSGCSGMAYVLEFVDEINDDDIVFEDKGVKVIIDGKSMVYLDGTELDFVKEGLNEGFKFNNPNVSNECGCGESFNV</sequence>
<comment type="function">
    <text evidence="1">Is able to transfer iron-sulfur clusters to apo-ferredoxin. Multiple cycles of [2Fe2S] cluster formation and transfer are observed, suggesting that IscA acts catalytically. Recruits intracellular free iron so as to provide iron for the assembly of transient iron-sulfur cluster in IscU in the presence of IscS, L-cysteine and the thioredoxin reductase system TrxA/TrxB.</text>
</comment>
<comment type="cofactor">
    <cofactor evidence="1">
        <name>Fe cation</name>
        <dbReference type="ChEBI" id="CHEBI:24875"/>
    </cofactor>
    <text evidence="1">Binds 2 iron ions per dimer. The dimer may bind additional iron ions.</text>
</comment>
<comment type="subunit">
    <text evidence="1">Homodimer; may form tetramers and higher multimers.</text>
</comment>
<comment type="similarity">
    <text evidence="1">Belongs to the HesB/IscA family.</text>
</comment>
<keyword id="KW-0408">Iron</keyword>
<keyword id="KW-0479">Metal-binding</keyword>